<organism>
    <name type="scientific">Vibrio parahaemolyticus serotype O3:K6 (strain RIMD 2210633)</name>
    <dbReference type="NCBI Taxonomy" id="223926"/>
    <lineage>
        <taxon>Bacteria</taxon>
        <taxon>Pseudomonadati</taxon>
        <taxon>Pseudomonadota</taxon>
        <taxon>Gammaproteobacteria</taxon>
        <taxon>Vibrionales</taxon>
        <taxon>Vibrionaceae</taxon>
        <taxon>Vibrio</taxon>
    </lineage>
</organism>
<accession>Q87RC5</accession>
<dbReference type="EMBL" id="BA000031">
    <property type="protein sequence ID" value="BAC59135.1"/>
    <property type="molecule type" value="Genomic_DNA"/>
</dbReference>
<dbReference type="RefSeq" id="NP_797251.1">
    <property type="nucleotide sequence ID" value="NC_004603.1"/>
</dbReference>
<dbReference type="RefSeq" id="WP_005458079.1">
    <property type="nucleotide sequence ID" value="NC_004603.1"/>
</dbReference>
<dbReference type="SMR" id="Q87RC5"/>
<dbReference type="GeneID" id="1188369"/>
<dbReference type="KEGG" id="vpa:VP0872"/>
<dbReference type="PATRIC" id="fig|223926.6.peg.825"/>
<dbReference type="eggNOG" id="COG0851">
    <property type="taxonomic scope" value="Bacteria"/>
</dbReference>
<dbReference type="HOGENOM" id="CLU_137929_2_2_6"/>
<dbReference type="Proteomes" id="UP000002493">
    <property type="component" value="Chromosome 1"/>
</dbReference>
<dbReference type="GO" id="GO:0051301">
    <property type="term" value="P:cell division"/>
    <property type="evidence" value="ECO:0007669"/>
    <property type="project" value="UniProtKB-KW"/>
</dbReference>
<dbReference type="GO" id="GO:0032955">
    <property type="term" value="P:regulation of division septum assembly"/>
    <property type="evidence" value="ECO:0007669"/>
    <property type="project" value="InterPro"/>
</dbReference>
<dbReference type="FunFam" id="3.30.1070.10:FF:000001">
    <property type="entry name" value="Cell division topological specificity factor"/>
    <property type="match status" value="1"/>
</dbReference>
<dbReference type="Gene3D" id="3.30.1070.10">
    <property type="entry name" value="Cell division topological specificity factor MinE"/>
    <property type="match status" value="1"/>
</dbReference>
<dbReference type="HAMAP" id="MF_00262">
    <property type="entry name" value="MinE"/>
    <property type="match status" value="1"/>
</dbReference>
<dbReference type="InterPro" id="IPR005527">
    <property type="entry name" value="MinE"/>
</dbReference>
<dbReference type="InterPro" id="IPR036707">
    <property type="entry name" value="MinE_sf"/>
</dbReference>
<dbReference type="NCBIfam" id="TIGR01215">
    <property type="entry name" value="minE"/>
    <property type="match status" value="1"/>
</dbReference>
<dbReference type="NCBIfam" id="NF001422">
    <property type="entry name" value="PRK00296.1"/>
    <property type="match status" value="1"/>
</dbReference>
<dbReference type="Pfam" id="PF03776">
    <property type="entry name" value="MinE"/>
    <property type="match status" value="1"/>
</dbReference>
<dbReference type="SUPFAM" id="SSF55229">
    <property type="entry name" value="Cell division protein MinE topological specificity domain"/>
    <property type="match status" value="1"/>
</dbReference>
<gene>
    <name evidence="1" type="primary">minE</name>
    <name type="ordered locus">VP0872</name>
</gene>
<protein>
    <recommendedName>
        <fullName evidence="1">Cell division topological specificity factor</fullName>
    </recommendedName>
</protein>
<name>MINE_VIBPA</name>
<reference key="1">
    <citation type="journal article" date="2003" name="Lancet">
        <title>Genome sequence of Vibrio parahaemolyticus: a pathogenic mechanism distinct from that of V. cholerae.</title>
        <authorList>
            <person name="Makino K."/>
            <person name="Oshima K."/>
            <person name="Kurokawa K."/>
            <person name="Yokoyama K."/>
            <person name="Uda T."/>
            <person name="Tagomori K."/>
            <person name="Iijima Y."/>
            <person name="Najima M."/>
            <person name="Nakano M."/>
            <person name="Yamashita A."/>
            <person name="Kubota Y."/>
            <person name="Kimura S."/>
            <person name="Yasunaga T."/>
            <person name="Honda T."/>
            <person name="Shinagawa H."/>
            <person name="Hattori M."/>
            <person name="Iida T."/>
        </authorList>
    </citation>
    <scope>NUCLEOTIDE SEQUENCE [LARGE SCALE GENOMIC DNA]</scope>
    <source>
        <strain>RIMD 2210633</strain>
    </source>
</reference>
<keyword id="KW-0131">Cell cycle</keyword>
<keyword id="KW-0132">Cell division</keyword>
<evidence type="ECO:0000255" key="1">
    <source>
        <dbReference type="HAMAP-Rule" id="MF_00262"/>
    </source>
</evidence>
<comment type="function">
    <text evidence="1">Prevents the cell division inhibition by proteins MinC and MinD at internal division sites while permitting inhibition at polar sites. This ensures cell division at the proper site by restricting the formation of a division septum at the midpoint of the long axis of the cell.</text>
</comment>
<comment type="similarity">
    <text evidence="1">Belongs to the MinE family.</text>
</comment>
<feature type="chain" id="PRO_0000205891" description="Cell division topological specificity factor">
    <location>
        <begin position="1"/>
        <end position="87"/>
    </location>
</feature>
<sequence length="87" mass="10071">MSLLEFFRPQKKTSASLAKERLQIIVAERRSQNDPAPSYLPQLKEDILKVISKYVDIDPNMVDLTFEHKDDDISVLELNVKLPDDEK</sequence>
<proteinExistence type="inferred from homology"/>